<keyword id="KW-0249">Electron transport</keyword>
<keyword id="KW-0472">Membrane</keyword>
<keyword id="KW-0602">Photosynthesis</keyword>
<keyword id="KW-0934">Plastid</keyword>
<keyword id="KW-0812">Transmembrane</keyword>
<keyword id="KW-1133">Transmembrane helix</keyword>
<keyword id="KW-0813">Transport</keyword>
<comment type="function">
    <text evidence="1">Component of the cytochrome b6-f complex, which mediates electron transfer between photosystem II (PSII) and photosystem I (PSI), cyclic electron flow around PSI, and state transitions.</text>
</comment>
<comment type="subunit">
    <text evidence="1">The 4 large subunits of the cytochrome b6-f complex are cytochrome b6, subunit IV (17 kDa polypeptide, PetD), cytochrome f and the Rieske protein, while the 4 small subunits are PetG, PetL, PetM and PetN. The complex functions as a dimer.</text>
</comment>
<comment type="subcellular location">
    <subcellularLocation>
        <location evidence="2">Plastid membrane</location>
        <topology evidence="1">Single-pass membrane protein</topology>
    </subcellularLocation>
</comment>
<comment type="similarity">
    <text evidence="1">Belongs to the PetN family.</text>
</comment>
<comment type="caution">
    <text evidence="2">Young tissue from this organism is photosynthetic and contains some thylakoids, although the photosynthetic activity does not exceed the light compensation point.</text>
</comment>
<protein>
    <recommendedName>
        <fullName evidence="1">Cytochrome b6-f complex subunit 8</fullName>
    </recommendedName>
    <alternativeName>
        <fullName evidence="1">Cytochrome b6-f complex subunit PetN</fullName>
    </alternativeName>
    <alternativeName>
        <fullName evidence="1">Cytochrome b6-f complex subunit VIII</fullName>
    </alternativeName>
</protein>
<dbReference type="EMBL" id="AM711640">
    <property type="protein sequence ID" value="CAM98388.1"/>
    <property type="molecule type" value="Genomic_DNA"/>
</dbReference>
<dbReference type="RefSeq" id="YP_001430102.1">
    <property type="nucleotide sequence ID" value="NC_009766.1"/>
</dbReference>
<dbReference type="SMR" id="A7M960"/>
<dbReference type="GeneID" id="5536672"/>
<dbReference type="GO" id="GO:0009512">
    <property type="term" value="C:cytochrome b6f complex"/>
    <property type="evidence" value="ECO:0007669"/>
    <property type="project" value="InterPro"/>
</dbReference>
<dbReference type="GO" id="GO:0042170">
    <property type="term" value="C:plastid membrane"/>
    <property type="evidence" value="ECO:0007669"/>
    <property type="project" value="UniProtKB-SubCell"/>
</dbReference>
<dbReference type="GO" id="GO:0042651">
    <property type="term" value="C:thylakoid membrane"/>
    <property type="evidence" value="ECO:0007669"/>
    <property type="project" value="UniProtKB-UniRule"/>
</dbReference>
<dbReference type="GO" id="GO:0045158">
    <property type="term" value="F:electron transporter, transferring electrons within cytochrome b6/f complex of photosystem II activity"/>
    <property type="evidence" value="ECO:0007669"/>
    <property type="project" value="InterPro"/>
</dbReference>
<dbReference type="GO" id="GO:0017004">
    <property type="term" value="P:cytochrome complex assembly"/>
    <property type="evidence" value="ECO:0007669"/>
    <property type="project" value="UniProtKB-UniRule"/>
</dbReference>
<dbReference type="GO" id="GO:0015979">
    <property type="term" value="P:photosynthesis"/>
    <property type="evidence" value="ECO:0007669"/>
    <property type="project" value="UniProtKB-KW"/>
</dbReference>
<dbReference type="HAMAP" id="MF_00395">
    <property type="entry name" value="Cytb6_f_PetN"/>
    <property type="match status" value="1"/>
</dbReference>
<dbReference type="InterPro" id="IPR036143">
    <property type="entry name" value="Cytochr_b6-f_cplx_su8_sf"/>
</dbReference>
<dbReference type="InterPro" id="IPR005497">
    <property type="entry name" value="Cytochrome_b6-f_cplx_su8"/>
</dbReference>
<dbReference type="Pfam" id="PF03742">
    <property type="entry name" value="PetN"/>
    <property type="match status" value="1"/>
</dbReference>
<dbReference type="SUPFAM" id="SSF103451">
    <property type="entry name" value="PetN subunit of the cytochrome b6f complex"/>
    <property type="match status" value="1"/>
</dbReference>
<reference key="1">
    <citation type="journal article" date="2007" name="BMC Plant Biol.">
        <title>Complete DNA sequences of the plastid genomes of two parasitic flowering plant species, Cuscuta reflexa and Cuscuta gronovii.</title>
        <authorList>
            <person name="Funk H.T."/>
            <person name="Berg S."/>
            <person name="Krupinska K."/>
            <person name="Maier U.-G."/>
            <person name="Krause K."/>
        </authorList>
    </citation>
    <scope>NUCLEOTIDE SEQUENCE [LARGE SCALE GENOMIC DNA]</scope>
</reference>
<organism>
    <name type="scientific">Cuscuta reflexa</name>
    <name type="common">Southern Asian dodder</name>
    <dbReference type="NCBI Taxonomy" id="4129"/>
    <lineage>
        <taxon>Eukaryota</taxon>
        <taxon>Viridiplantae</taxon>
        <taxon>Streptophyta</taxon>
        <taxon>Embryophyta</taxon>
        <taxon>Tracheophyta</taxon>
        <taxon>Spermatophyta</taxon>
        <taxon>Magnoliopsida</taxon>
        <taxon>eudicotyledons</taxon>
        <taxon>Gunneridae</taxon>
        <taxon>Pentapetalae</taxon>
        <taxon>asterids</taxon>
        <taxon>lamiids</taxon>
        <taxon>Solanales</taxon>
        <taxon>Convolvulaceae</taxon>
        <taxon>Cuscuteae</taxon>
        <taxon>Cuscuta</taxon>
        <taxon>Cuscuta subgen. Monogynella</taxon>
    </lineage>
</organism>
<evidence type="ECO:0000255" key="1">
    <source>
        <dbReference type="HAMAP-Rule" id="MF_00395"/>
    </source>
</evidence>
<evidence type="ECO:0000305" key="2"/>
<proteinExistence type="inferred from homology"/>
<feature type="chain" id="PRO_0000355435" description="Cytochrome b6-f complex subunit 8">
    <location>
        <begin position="1"/>
        <end position="29"/>
    </location>
</feature>
<feature type="transmembrane region" description="Helical" evidence="1">
    <location>
        <begin position="3"/>
        <end position="23"/>
    </location>
</feature>
<gene>
    <name evidence="1" type="primary">petN</name>
</gene>
<name>PETN_CUSRE</name>
<accession>A7M960</accession>
<sequence>MDIVSLAWAALMVVFTFSLSLVVWGRSGL</sequence>
<geneLocation type="plastid"/>